<proteinExistence type="inferred from homology"/>
<evidence type="ECO:0000255" key="1">
    <source>
        <dbReference type="HAMAP-Rule" id="MF_01694"/>
    </source>
</evidence>
<evidence type="ECO:0000255" key="2">
    <source>
        <dbReference type="PROSITE-ProRule" id="PRU01266"/>
    </source>
</evidence>
<name>BIOB_MAGMM</name>
<reference key="1">
    <citation type="journal article" date="2009" name="Appl. Environ. Microbiol.">
        <title>Complete genome sequence of the chemolithoautotrophic marine magnetotactic coccus strain MC-1.</title>
        <authorList>
            <person name="Schubbe S."/>
            <person name="Williams T.J."/>
            <person name="Xie G."/>
            <person name="Kiss H.E."/>
            <person name="Brettin T.S."/>
            <person name="Martinez D."/>
            <person name="Ross C.A."/>
            <person name="Schuler D."/>
            <person name="Cox B.L."/>
            <person name="Nealson K.H."/>
            <person name="Bazylinski D.A."/>
        </authorList>
    </citation>
    <scope>NUCLEOTIDE SEQUENCE [LARGE SCALE GENOMIC DNA]</scope>
    <source>
        <strain>ATCC BAA-1437 / JCM 17883 / MC-1</strain>
    </source>
</reference>
<comment type="function">
    <text evidence="1">Catalyzes the conversion of dethiobiotin (DTB) to biotin by the insertion of a sulfur atom into dethiobiotin via a radical-based mechanism.</text>
</comment>
<comment type="catalytic activity">
    <reaction evidence="1">
        <text>(4R,5S)-dethiobiotin + (sulfur carrier)-SH + 2 reduced [2Fe-2S]-[ferredoxin] + 2 S-adenosyl-L-methionine = (sulfur carrier)-H + biotin + 2 5'-deoxyadenosine + 2 L-methionine + 2 oxidized [2Fe-2S]-[ferredoxin]</text>
        <dbReference type="Rhea" id="RHEA:22060"/>
        <dbReference type="Rhea" id="RHEA-COMP:10000"/>
        <dbReference type="Rhea" id="RHEA-COMP:10001"/>
        <dbReference type="Rhea" id="RHEA-COMP:14737"/>
        <dbReference type="Rhea" id="RHEA-COMP:14739"/>
        <dbReference type="ChEBI" id="CHEBI:17319"/>
        <dbReference type="ChEBI" id="CHEBI:29917"/>
        <dbReference type="ChEBI" id="CHEBI:33737"/>
        <dbReference type="ChEBI" id="CHEBI:33738"/>
        <dbReference type="ChEBI" id="CHEBI:57586"/>
        <dbReference type="ChEBI" id="CHEBI:57844"/>
        <dbReference type="ChEBI" id="CHEBI:59789"/>
        <dbReference type="ChEBI" id="CHEBI:64428"/>
        <dbReference type="ChEBI" id="CHEBI:149473"/>
        <dbReference type="EC" id="2.8.1.6"/>
    </reaction>
</comment>
<comment type="cofactor">
    <cofactor evidence="1">
        <name>[4Fe-4S] cluster</name>
        <dbReference type="ChEBI" id="CHEBI:49883"/>
    </cofactor>
    <text evidence="1">Binds 1 [4Fe-4S] cluster. The cluster is coordinated with 3 cysteines and an exchangeable S-adenosyl-L-methionine.</text>
</comment>
<comment type="cofactor">
    <cofactor evidence="1">
        <name>[2Fe-2S] cluster</name>
        <dbReference type="ChEBI" id="CHEBI:190135"/>
    </cofactor>
    <text evidence="1">Binds 1 [2Fe-2S] cluster. The cluster is coordinated with 3 cysteines and 1 arginine.</text>
</comment>
<comment type="pathway">
    <text evidence="1">Cofactor biosynthesis; biotin biosynthesis; biotin from 7,8-diaminononanoate: step 2/2.</text>
</comment>
<comment type="subunit">
    <text evidence="1">Homodimer.</text>
</comment>
<comment type="similarity">
    <text evidence="1">Belongs to the radical SAM superfamily. Biotin synthase family.</text>
</comment>
<keyword id="KW-0001">2Fe-2S</keyword>
<keyword id="KW-0004">4Fe-4S</keyword>
<keyword id="KW-0093">Biotin biosynthesis</keyword>
<keyword id="KW-0408">Iron</keyword>
<keyword id="KW-0411">Iron-sulfur</keyword>
<keyword id="KW-0479">Metal-binding</keyword>
<keyword id="KW-1185">Reference proteome</keyword>
<keyword id="KW-0949">S-adenosyl-L-methionine</keyword>
<keyword id="KW-0808">Transferase</keyword>
<gene>
    <name evidence="1" type="primary">bioB</name>
    <name type="ordered locus">Mmc1_0034</name>
</gene>
<protein>
    <recommendedName>
        <fullName evidence="1">Biotin synthase</fullName>
        <ecNumber evidence="1">2.8.1.6</ecNumber>
    </recommendedName>
</protein>
<dbReference type="EC" id="2.8.1.6" evidence="1"/>
<dbReference type="EMBL" id="CP000471">
    <property type="protein sequence ID" value="ABK42563.1"/>
    <property type="molecule type" value="Genomic_DNA"/>
</dbReference>
<dbReference type="SMR" id="A0L3M0"/>
<dbReference type="STRING" id="156889.Mmc1_0034"/>
<dbReference type="KEGG" id="mgm:Mmc1_0034"/>
<dbReference type="eggNOG" id="COG0502">
    <property type="taxonomic scope" value="Bacteria"/>
</dbReference>
<dbReference type="HOGENOM" id="CLU_033172_2_1_5"/>
<dbReference type="OrthoDB" id="9786826at2"/>
<dbReference type="UniPathway" id="UPA00078">
    <property type="reaction ID" value="UER00162"/>
</dbReference>
<dbReference type="Proteomes" id="UP000002586">
    <property type="component" value="Chromosome"/>
</dbReference>
<dbReference type="GO" id="GO:0051537">
    <property type="term" value="F:2 iron, 2 sulfur cluster binding"/>
    <property type="evidence" value="ECO:0007669"/>
    <property type="project" value="UniProtKB-KW"/>
</dbReference>
<dbReference type="GO" id="GO:0051539">
    <property type="term" value="F:4 iron, 4 sulfur cluster binding"/>
    <property type="evidence" value="ECO:0007669"/>
    <property type="project" value="UniProtKB-KW"/>
</dbReference>
<dbReference type="GO" id="GO:0004076">
    <property type="term" value="F:biotin synthase activity"/>
    <property type="evidence" value="ECO:0007669"/>
    <property type="project" value="UniProtKB-UniRule"/>
</dbReference>
<dbReference type="GO" id="GO:0005506">
    <property type="term" value="F:iron ion binding"/>
    <property type="evidence" value="ECO:0007669"/>
    <property type="project" value="UniProtKB-UniRule"/>
</dbReference>
<dbReference type="GO" id="GO:0009102">
    <property type="term" value="P:biotin biosynthetic process"/>
    <property type="evidence" value="ECO:0007669"/>
    <property type="project" value="UniProtKB-UniRule"/>
</dbReference>
<dbReference type="CDD" id="cd01335">
    <property type="entry name" value="Radical_SAM"/>
    <property type="match status" value="1"/>
</dbReference>
<dbReference type="FunFam" id="3.20.20.70:FF:000026">
    <property type="entry name" value="Biotin synthase"/>
    <property type="match status" value="1"/>
</dbReference>
<dbReference type="Gene3D" id="3.20.20.70">
    <property type="entry name" value="Aldolase class I"/>
    <property type="match status" value="1"/>
</dbReference>
<dbReference type="HAMAP" id="MF_01694">
    <property type="entry name" value="BioB"/>
    <property type="match status" value="1"/>
</dbReference>
<dbReference type="InterPro" id="IPR013785">
    <property type="entry name" value="Aldolase_TIM"/>
</dbReference>
<dbReference type="InterPro" id="IPR010722">
    <property type="entry name" value="BATS_dom"/>
</dbReference>
<dbReference type="InterPro" id="IPR002684">
    <property type="entry name" value="Biotin_synth/BioAB"/>
</dbReference>
<dbReference type="InterPro" id="IPR024177">
    <property type="entry name" value="Biotin_synthase"/>
</dbReference>
<dbReference type="InterPro" id="IPR006638">
    <property type="entry name" value="Elp3/MiaA/NifB-like_rSAM"/>
</dbReference>
<dbReference type="InterPro" id="IPR007197">
    <property type="entry name" value="rSAM"/>
</dbReference>
<dbReference type="NCBIfam" id="TIGR00433">
    <property type="entry name" value="bioB"/>
    <property type="match status" value="1"/>
</dbReference>
<dbReference type="PANTHER" id="PTHR22976">
    <property type="entry name" value="BIOTIN SYNTHASE"/>
    <property type="match status" value="1"/>
</dbReference>
<dbReference type="PANTHER" id="PTHR22976:SF2">
    <property type="entry name" value="BIOTIN SYNTHASE, MITOCHONDRIAL"/>
    <property type="match status" value="1"/>
</dbReference>
<dbReference type="Pfam" id="PF06968">
    <property type="entry name" value="BATS"/>
    <property type="match status" value="1"/>
</dbReference>
<dbReference type="Pfam" id="PF04055">
    <property type="entry name" value="Radical_SAM"/>
    <property type="match status" value="1"/>
</dbReference>
<dbReference type="PIRSF" id="PIRSF001619">
    <property type="entry name" value="Biotin_synth"/>
    <property type="match status" value="1"/>
</dbReference>
<dbReference type="SFLD" id="SFLDG01060">
    <property type="entry name" value="BATS_domain_containing"/>
    <property type="match status" value="1"/>
</dbReference>
<dbReference type="SFLD" id="SFLDG01278">
    <property type="entry name" value="biotin_synthase_like"/>
    <property type="match status" value="1"/>
</dbReference>
<dbReference type="SMART" id="SM00876">
    <property type="entry name" value="BATS"/>
    <property type="match status" value="1"/>
</dbReference>
<dbReference type="SMART" id="SM00729">
    <property type="entry name" value="Elp3"/>
    <property type="match status" value="1"/>
</dbReference>
<dbReference type="SUPFAM" id="SSF102114">
    <property type="entry name" value="Radical SAM enzymes"/>
    <property type="match status" value="1"/>
</dbReference>
<dbReference type="PROSITE" id="PS51918">
    <property type="entry name" value="RADICAL_SAM"/>
    <property type="match status" value="1"/>
</dbReference>
<accession>A0L3M0</accession>
<feature type="chain" id="PRO_0000381452" description="Biotin synthase">
    <location>
        <begin position="1"/>
        <end position="321"/>
    </location>
</feature>
<feature type="domain" description="Radical SAM core" evidence="2">
    <location>
        <begin position="44"/>
        <end position="270"/>
    </location>
</feature>
<feature type="binding site" evidence="1">
    <location>
        <position position="59"/>
    </location>
    <ligand>
        <name>[4Fe-4S] cluster</name>
        <dbReference type="ChEBI" id="CHEBI:49883"/>
        <note>4Fe-4S-S-AdoMet</note>
    </ligand>
</feature>
<feature type="binding site" evidence="1">
    <location>
        <position position="63"/>
    </location>
    <ligand>
        <name>[4Fe-4S] cluster</name>
        <dbReference type="ChEBI" id="CHEBI:49883"/>
        <note>4Fe-4S-S-AdoMet</note>
    </ligand>
</feature>
<feature type="binding site" evidence="1">
    <location>
        <position position="66"/>
    </location>
    <ligand>
        <name>[4Fe-4S] cluster</name>
        <dbReference type="ChEBI" id="CHEBI:49883"/>
        <note>4Fe-4S-S-AdoMet</note>
    </ligand>
</feature>
<feature type="binding site" evidence="1">
    <location>
        <position position="103"/>
    </location>
    <ligand>
        <name>[2Fe-2S] cluster</name>
        <dbReference type="ChEBI" id="CHEBI:190135"/>
    </ligand>
</feature>
<feature type="binding site" evidence="1">
    <location>
        <position position="135"/>
    </location>
    <ligand>
        <name>[2Fe-2S] cluster</name>
        <dbReference type="ChEBI" id="CHEBI:190135"/>
    </ligand>
</feature>
<feature type="binding site" evidence="1">
    <location>
        <position position="195"/>
    </location>
    <ligand>
        <name>[2Fe-2S] cluster</name>
        <dbReference type="ChEBI" id="CHEBI:190135"/>
    </ligand>
</feature>
<feature type="binding site" evidence="1">
    <location>
        <position position="265"/>
    </location>
    <ligand>
        <name>[2Fe-2S] cluster</name>
        <dbReference type="ChEBI" id="CHEBI:190135"/>
    </ligand>
</feature>
<organism>
    <name type="scientific">Magnetococcus marinus (strain ATCC BAA-1437 / JCM 17883 / MC-1)</name>
    <dbReference type="NCBI Taxonomy" id="156889"/>
    <lineage>
        <taxon>Bacteria</taxon>
        <taxon>Pseudomonadati</taxon>
        <taxon>Pseudomonadota</taxon>
        <taxon>Alphaproteobacteria</taxon>
        <taxon>Magnetococcales</taxon>
        <taxon>Magnetococcaceae</taxon>
        <taxon>Magnetococcus</taxon>
    </lineage>
</organism>
<sequence>MAEAALAGQLPDAQSGLRLLTDPGIELLPLLQAAFRVRFHHFGRGVRIHILNNVQNGYCSEDCNYCAQAKNSKAPIEKYSIKSDEEILEGARKAYESGAYRYCMVSSGRSPHAERIDHMSKLIREIKSRWPVEVCLSAGFLDANKARELKEAGLDRYNHNLNTADGYYGSICTTHSYGDRLNTLQEARRAGLEVCSGIIIGMGEKPEEIVEVATTLRSLQARSIPVNFYVHVEGAQLGAVDQLTPAYALRALALFRFFNPDAEVRAAGGRESNLRGMESMALYPANSLFAEGYLNTTGHMAEKTVKMVEDAGFFVEKIEEE</sequence>